<keyword id="KW-1185">Reference proteome</keyword>
<keyword id="KW-0687">Ribonucleoprotein</keyword>
<keyword id="KW-0689">Ribosomal protein</keyword>
<keyword id="KW-0694">RNA-binding</keyword>
<keyword id="KW-0699">rRNA-binding</keyword>
<protein>
    <recommendedName>
        <fullName evidence="1">Small ribosomal subunit protein uS17</fullName>
    </recommendedName>
    <alternativeName>
        <fullName evidence="2">30S ribosomal protein S17</fullName>
    </alternativeName>
</protein>
<accession>Q92QG1</accession>
<evidence type="ECO:0000255" key="1">
    <source>
        <dbReference type="HAMAP-Rule" id="MF_01345"/>
    </source>
</evidence>
<evidence type="ECO:0000305" key="2"/>
<sequence>MPKRILQGTVVSDKNDKTVVVRVERRFAHPILQKTVRRSKKYKAHDENNQFKVGDLVSIEECAPISKDKRWTVVSAQS</sequence>
<gene>
    <name evidence="1" type="primary">rpsQ</name>
    <name type="ordered locus">R01365</name>
    <name type="ORF">SMc01300</name>
</gene>
<feature type="chain" id="PRO_0000233553" description="Small ribosomal subunit protein uS17">
    <location>
        <begin position="1"/>
        <end position="78"/>
    </location>
</feature>
<comment type="function">
    <text evidence="1">One of the primary rRNA binding proteins, it binds specifically to the 5'-end of 16S ribosomal RNA.</text>
</comment>
<comment type="subunit">
    <text evidence="1">Part of the 30S ribosomal subunit.</text>
</comment>
<comment type="similarity">
    <text evidence="1">Belongs to the universal ribosomal protein uS17 family.</text>
</comment>
<dbReference type="EMBL" id="AL591688">
    <property type="protein sequence ID" value="CAC45944.1"/>
    <property type="molecule type" value="Genomic_DNA"/>
</dbReference>
<dbReference type="RefSeq" id="NP_385471.1">
    <property type="nucleotide sequence ID" value="NC_003047.1"/>
</dbReference>
<dbReference type="RefSeq" id="WP_003536527.1">
    <property type="nucleotide sequence ID" value="NC_003047.1"/>
</dbReference>
<dbReference type="SMR" id="Q92QG1"/>
<dbReference type="EnsemblBacteria" id="CAC45944">
    <property type="protein sequence ID" value="CAC45944"/>
    <property type="gene ID" value="SMc01300"/>
</dbReference>
<dbReference type="GeneID" id="89575689"/>
<dbReference type="KEGG" id="sme:SMc01300"/>
<dbReference type="PATRIC" id="fig|266834.11.peg.2781"/>
<dbReference type="eggNOG" id="COG0186">
    <property type="taxonomic scope" value="Bacteria"/>
</dbReference>
<dbReference type="HOGENOM" id="CLU_073626_1_1_5"/>
<dbReference type="OrthoDB" id="9811714at2"/>
<dbReference type="Proteomes" id="UP000001976">
    <property type="component" value="Chromosome"/>
</dbReference>
<dbReference type="GO" id="GO:0022627">
    <property type="term" value="C:cytosolic small ribosomal subunit"/>
    <property type="evidence" value="ECO:0007669"/>
    <property type="project" value="TreeGrafter"/>
</dbReference>
<dbReference type="GO" id="GO:0019843">
    <property type="term" value="F:rRNA binding"/>
    <property type="evidence" value="ECO:0007669"/>
    <property type="project" value="UniProtKB-UniRule"/>
</dbReference>
<dbReference type="GO" id="GO:0003735">
    <property type="term" value="F:structural constituent of ribosome"/>
    <property type="evidence" value="ECO:0007669"/>
    <property type="project" value="InterPro"/>
</dbReference>
<dbReference type="GO" id="GO:0006412">
    <property type="term" value="P:translation"/>
    <property type="evidence" value="ECO:0007669"/>
    <property type="project" value="UniProtKB-UniRule"/>
</dbReference>
<dbReference type="CDD" id="cd00364">
    <property type="entry name" value="Ribosomal_uS17"/>
    <property type="match status" value="1"/>
</dbReference>
<dbReference type="Gene3D" id="2.40.50.140">
    <property type="entry name" value="Nucleic acid-binding proteins"/>
    <property type="match status" value="1"/>
</dbReference>
<dbReference type="HAMAP" id="MF_01345_B">
    <property type="entry name" value="Ribosomal_uS17_B"/>
    <property type="match status" value="1"/>
</dbReference>
<dbReference type="InterPro" id="IPR012340">
    <property type="entry name" value="NA-bd_OB-fold"/>
</dbReference>
<dbReference type="InterPro" id="IPR000266">
    <property type="entry name" value="Ribosomal_uS17"/>
</dbReference>
<dbReference type="InterPro" id="IPR019984">
    <property type="entry name" value="Ribosomal_uS17_bact/chlr"/>
</dbReference>
<dbReference type="NCBIfam" id="NF004123">
    <property type="entry name" value="PRK05610.1"/>
    <property type="match status" value="1"/>
</dbReference>
<dbReference type="NCBIfam" id="TIGR03635">
    <property type="entry name" value="uS17_bact"/>
    <property type="match status" value="1"/>
</dbReference>
<dbReference type="PANTHER" id="PTHR10744">
    <property type="entry name" value="40S RIBOSOMAL PROTEIN S11 FAMILY MEMBER"/>
    <property type="match status" value="1"/>
</dbReference>
<dbReference type="PANTHER" id="PTHR10744:SF1">
    <property type="entry name" value="SMALL RIBOSOMAL SUBUNIT PROTEIN US17M"/>
    <property type="match status" value="1"/>
</dbReference>
<dbReference type="Pfam" id="PF00366">
    <property type="entry name" value="Ribosomal_S17"/>
    <property type="match status" value="1"/>
</dbReference>
<dbReference type="PRINTS" id="PR00973">
    <property type="entry name" value="RIBOSOMALS17"/>
</dbReference>
<dbReference type="SUPFAM" id="SSF50249">
    <property type="entry name" value="Nucleic acid-binding proteins"/>
    <property type="match status" value="1"/>
</dbReference>
<reference key="1">
    <citation type="journal article" date="2001" name="Proc. Natl. Acad. Sci. U.S.A.">
        <title>Analysis of the chromosome sequence of the legume symbiont Sinorhizobium meliloti strain 1021.</title>
        <authorList>
            <person name="Capela D."/>
            <person name="Barloy-Hubler F."/>
            <person name="Gouzy J."/>
            <person name="Bothe G."/>
            <person name="Ampe F."/>
            <person name="Batut J."/>
            <person name="Boistard P."/>
            <person name="Becker A."/>
            <person name="Boutry M."/>
            <person name="Cadieu E."/>
            <person name="Dreano S."/>
            <person name="Gloux S."/>
            <person name="Godrie T."/>
            <person name="Goffeau A."/>
            <person name="Kahn D."/>
            <person name="Kiss E."/>
            <person name="Lelaure V."/>
            <person name="Masuy D."/>
            <person name="Pohl T."/>
            <person name="Portetelle D."/>
            <person name="Puehler A."/>
            <person name="Purnelle B."/>
            <person name="Ramsperger U."/>
            <person name="Renard C."/>
            <person name="Thebault P."/>
            <person name="Vandenbol M."/>
            <person name="Weidner S."/>
            <person name="Galibert F."/>
        </authorList>
    </citation>
    <scope>NUCLEOTIDE SEQUENCE [LARGE SCALE GENOMIC DNA]</scope>
    <source>
        <strain>1021</strain>
    </source>
</reference>
<reference key="2">
    <citation type="journal article" date="2001" name="Science">
        <title>The composite genome of the legume symbiont Sinorhizobium meliloti.</title>
        <authorList>
            <person name="Galibert F."/>
            <person name="Finan T.M."/>
            <person name="Long S.R."/>
            <person name="Puehler A."/>
            <person name="Abola P."/>
            <person name="Ampe F."/>
            <person name="Barloy-Hubler F."/>
            <person name="Barnett M.J."/>
            <person name="Becker A."/>
            <person name="Boistard P."/>
            <person name="Bothe G."/>
            <person name="Boutry M."/>
            <person name="Bowser L."/>
            <person name="Buhrmester J."/>
            <person name="Cadieu E."/>
            <person name="Capela D."/>
            <person name="Chain P."/>
            <person name="Cowie A."/>
            <person name="Davis R.W."/>
            <person name="Dreano S."/>
            <person name="Federspiel N.A."/>
            <person name="Fisher R.F."/>
            <person name="Gloux S."/>
            <person name="Godrie T."/>
            <person name="Goffeau A."/>
            <person name="Golding B."/>
            <person name="Gouzy J."/>
            <person name="Gurjal M."/>
            <person name="Hernandez-Lucas I."/>
            <person name="Hong A."/>
            <person name="Huizar L."/>
            <person name="Hyman R.W."/>
            <person name="Jones T."/>
            <person name="Kahn D."/>
            <person name="Kahn M.L."/>
            <person name="Kalman S."/>
            <person name="Keating D.H."/>
            <person name="Kiss E."/>
            <person name="Komp C."/>
            <person name="Lelaure V."/>
            <person name="Masuy D."/>
            <person name="Palm C."/>
            <person name="Peck M.C."/>
            <person name="Pohl T.M."/>
            <person name="Portetelle D."/>
            <person name="Purnelle B."/>
            <person name="Ramsperger U."/>
            <person name="Surzycki R."/>
            <person name="Thebault P."/>
            <person name="Vandenbol M."/>
            <person name="Vorhoelter F.J."/>
            <person name="Weidner S."/>
            <person name="Wells D.H."/>
            <person name="Wong K."/>
            <person name="Yeh K.-C."/>
            <person name="Batut J."/>
        </authorList>
    </citation>
    <scope>NUCLEOTIDE SEQUENCE [LARGE SCALE GENOMIC DNA]</scope>
    <source>
        <strain>1021</strain>
    </source>
</reference>
<organism>
    <name type="scientific">Rhizobium meliloti (strain 1021)</name>
    <name type="common">Ensifer meliloti</name>
    <name type="synonym">Sinorhizobium meliloti</name>
    <dbReference type="NCBI Taxonomy" id="266834"/>
    <lineage>
        <taxon>Bacteria</taxon>
        <taxon>Pseudomonadati</taxon>
        <taxon>Pseudomonadota</taxon>
        <taxon>Alphaproteobacteria</taxon>
        <taxon>Hyphomicrobiales</taxon>
        <taxon>Rhizobiaceae</taxon>
        <taxon>Sinorhizobium/Ensifer group</taxon>
        <taxon>Sinorhizobium</taxon>
    </lineage>
</organism>
<proteinExistence type="inferred from homology"/>
<name>RS17_RHIME</name>